<accession>A2SDH0</accession>
<protein>
    <recommendedName>
        <fullName evidence="1">Elongation factor 4</fullName>
        <shortName evidence="1">EF-4</shortName>
        <ecNumber evidence="1">3.6.5.n1</ecNumber>
    </recommendedName>
    <alternativeName>
        <fullName evidence="1">Ribosomal back-translocase LepA</fullName>
    </alternativeName>
</protein>
<sequence length="604" mass="66962">MDHIRNFSIIAHIDHGKSTLADRIIQRCGGLSDREMEAQVLDSMDIERERGITIKAQTAALNYKARDGRVYQLNLIDTPGHVDFSYEVSRSLSACEGALLVVDASQGVEAQTVANCYTALDLGVEVVPVLNKMDLPQADPENAKAEIEDVIGIDAEHAIPCSAKTGEGIDEILEAVITRMPAPRGQPDGPPRAMIIDSWFDNYVGVVMLVRMVDGVLRKGDRIRMMATDTVYPLEQLGVFAPKSESREQLKAGEVGFLIAGIKELQAAKVGDTITLEKKLPNNAGPASDPLPGFKEIQPQVFAGLYPTEASEYDQLRDALEKLKLNDSSLRYEPEVSQALGFGFRCGFLGLLHMEIVQERLEREFDQDLITTAPSVVYQVQLGGLAGEVIEVENPSKMPEIGKIAEIREPIVTVHLYMPQDYVGPVMTLANQKRGVQLNMAYHGRQVMLTYEMPLAEIVLDFFDKLKSVSRGYASMDYEFKEYRAADVVKVDILINGDRVDALSIIVHRSQSQYRGRAVVAKMREIISRQMYDVAIQAAIGANIIARENIKALRKNVLAKCYGGDISRKRKLLEKQKAGKKRMKQIGSVEVPQEAFLAILQVDD</sequence>
<reference key="1">
    <citation type="journal article" date="2007" name="J. Bacteriol.">
        <title>Whole-genome analysis of the methyl tert-butyl ether-degrading beta-proteobacterium Methylibium petroleiphilum PM1.</title>
        <authorList>
            <person name="Kane S.R."/>
            <person name="Chakicherla A.Y."/>
            <person name="Chain P.S.G."/>
            <person name="Schmidt R."/>
            <person name="Shin M.W."/>
            <person name="Legler T.C."/>
            <person name="Scow K.M."/>
            <person name="Larimer F.W."/>
            <person name="Lucas S.M."/>
            <person name="Richardson P.M."/>
            <person name="Hristova K.R."/>
        </authorList>
    </citation>
    <scope>NUCLEOTIDE SEQUENCE [LARGE SCALE GENOMIC DNA]</scope>
    <source>
        <strain>ATCC BAA-1232 / LMG 22953 / PM1</strain>
    </source>
</reference>
<gene>
    <name evidence="1" type="primary">lepA</name>
    <name type="ordered locus">Mpe_A0647</name>
</gene>
<keyword id="KW-0997">Cell inner membrane</keyword>
<keyword id="KW-1003">Cell membrane</keyword>
<keyword id="KW-0342">GTP-binding</keyword>
<keyword id="KW-0378">Hydrolase</keyword>
<keyword id="KW-0472">Membrane</keyword>
<keyword id="KW-0547">Nucleotide-binding</keyword>
<keyword id="KW-0648">Protein biosynthesis</keyword>
<keyword id="KW-1185">Reference proteome</keyword>
<feature type="chain" id="PRO_1000032019" description="Elongation factor 4">
    <location>
        <begin position="1"/>
        <end position="604"/>
    </location>
</feature>
<feature type="domain" description="tr-type G">
    <location>
        <begin position="2"/>
        <end position="184"/>
    </location>
</feature>
<feature type="binding site" evidence="1">
    <location>
        <begin position="14"/>
        <end position="19"/>
    </location>
    <ligand>
        <name>GTP</name>
        <dbReference type="ChEBI" id="CHEBI:37565"/>
    </ligand>
</feature>
<feature type="binding site" evidence="1">
    <location>
        <begin position="131"/>
        <end position="134"/>
    </location>
    <ligand>
        <name>GTP</name>
        <dbReference type="ChEBI" id="CHEBI:37565"/>
    </ligand>
</feature>
<name>LEPA_METPP</name>
<evidence type="ECO:0000255" key="1">
    <source>
        <dbReference type="HAMAP-Rule" id="MF_00071"/>
    </source>
</evidence>
<comment type="function">
    <text evidence="1">Required for accurate and efficient protein synthesis under certain stress conditions. May act as a fidelity factor of the translation reaction, by catalyzing a one-codon backward translocation of tRNAs on improperly translocated ribosomes. Back-translocation proceeds from a post-translocation (POST) complex to a pre-translocation (PRE) complex, thus giving elongation factor G a second chance to translocate the tRNAs correctly. Binds to ribosomes in a GTP-dependent manner.</text>
</comment>
<comment type="catalytic activity">
    <reaction evidence="1">
        <text>GTP + H2O = GDP + phosphate + H(+)</text>
        <dbReference type="Rhea" id="RHEA:19669"/>
        <dbReference type="ChEBI" id="CHEBI:15377"/>
        <dbReference type="ChEBI" id="CHEBI:15378"/>
        <dbReference type="ChEBI" id="CHEBI:37565"/>
        <dbReference type="ChEBI" id="CHEBI:43474"/>
        <dbReference type="ChEBI" id="CHEBI:58189"/>
        <dbReference type="EC" id="3.6.5.n1"/>
    </reaction>
</comment>
<comment type="subcellular location">
    <subcellularLocation>
        <location evidence="1">Cell inner membrane</location>
        <topology evidence="1">Peripheral membrane protein</topology>
        <orientation evidence="1">Cytoplasmic side</orientation>
    </subcellularLocation>
</comment>
<comment type="similarity">
    <text evidence="1">Belongs to the TRAFAC class translation factor GTPase superfamily. Classic translation factor GTPase family. LepA subfamily.</text>
</comment>
<dbReference type="EC" id="3.6.5.n1" evidence="1"/>
<dbReference type="EMBL" id="CP000555">
    <property type="protein sequence ID" value="ABM93609.1"/>
    <property type="molecule type" value="Genomic_DNA"/>
</dbReference>
<dbReference type="RefSeq" id="WP_011828247.1">
    <property type="nucleotide sequence ID" value="NC_008825.1"/>
</dbReference>
<dbReference type="SMR" id="A2SDH0"/>
<dbReference type="STRING" id="420662.Mpe_A0647"/>
<dbReference type="KEGG" id="mpt:Mpe_A0647"/>
<dbReference type="eggNOG" id="COG0481">
    <property type="taxonomic scope" value="Bacteria"/>
</dbReference>
<dbReference type="HOGENOM" id="CLU_009995_3_3_4"/>
<dbReference type="Proteomes" id="UP000000366">
    <property type="component" value="Chromosome"/>
</dbReference>
<dbReference type="GO" id="GO:0005886">
    <property type="term" value="C:plasma membrane"/>
    <property type="evidence" value="ECO:0007669"/>
    <property type="project" value="UniProtKB-SubCell"/>
</dbReference>
<dbReference type="GO" id="GO:0005525">
    <property type="term" value="F:GTP binding"/>
    <property type="evidence" value="ECO:0007669"/>
    <property type="project" value="UniProtKB-UniRule"/>
</dbReference>
<dbReference type="GO" id="GO:0003924">
    <property type="term" value="F:GTPase activity"/>
    <property type="evidence" value="ECO:0007669"/>
    <property type="project" value="UniProtKB-UniRule"/>
</dbReference>
<dbReference type="GO" id="GO:0097216">
    <property type="term" value="F:guanosine tetraphosphate binding"/>
    <property type="evidence" value="ECO:0007669"/>
    <property type="project" value="UniProtKB-ARBA"/>
</dbReference>
<dbReference type="GO" id="GO:0043022">
    <property type="term" value="F:ribosome binding"/>
    <property type="evidence" value="ECO:0007669"/>
    <property type="project" value="UniProtKB-UniRule"/>
</dbReference>
<dbReference type="GO" id="GO:0003746">
    <property type="term" value="F:translation elongation factor activity"/>
    <property type="evidence" value="ECO:0007669"/>
    <property type="project" value="UniProtKB-UniRule"/>
</dbReference>
<dbReference type="GO" id="GO:0045727">
    <property type="term" value="P:positive regulation of translation"/>
    <property type="evidence" value="ECO:0007669"/>
    <property type="project" value="UniProtKB-UniRule"/>
</dbReference>
<dbReference type="CDD" id="cd03699">
    <property type="entry name" value="EF4_II"/>
    <property type="match status" value="1"/>
</dbReference>
<dbReference type="CDD" id="cd16260">
    <property type="entry name" value="EF4_III"/>
    <property type="match status" value="1"/>
</dbReference>
<dbReference type="CDD" id="cd01890">
    <property type="entry name" value="LepA"/>
    <property type="match status" value="1"/>
</dbReference>
<dbReference type="CDD" id="cd03709">
    <property type="entry name" value="lepA_C"/>
    <property type="match status" value="1"/>
</dbReference>
<dbReference type="FunFam" id="3.40.50.300:FF:000078">
    <property type="entry name" value="Elongation factor 4"/>
    <property type="match status" value="1"/>
</dbReference>
<dbReference type="FunFam" id="2.40.30.10:FF:000015">
    <property type="entry name" value="Translation factor GUF1, mitochondrial"/>
    <property type="match status" value="1"/>
</dbReference>
<dbReference type="FunFam" id="3.30.70.240:FF:000007">
    <property type="entry name" value="Translation factor GUF1, mitochondrial"/>
    <property type="match status" value="1"/>
</dbReference>
<dbReference type="FunFam" id="3.30.70.2570:FF:000001">
    <property type="entry name" value="Translation factor GUF1, mitochondrial"/>
    <property type="match status" value="1"/>
</dbReference>
<dbReference type="FunFam" id="3.30.70.870:FF:000004">
    <property type="entry name" value="Translation factor GUF1, mitochondrial"/>
    <property type="match status" value="1"/>
</dbReference>
<dbReference type="Gene3D" id="3.30.70.240">
    <property type="match status" value="1"/>
</dbReference>
<dbReference type="Gene3D" id="3.30.70.2570">
    <property type="entry name" value="Elongation factor 4, C-terminal domain"/>
    <property type="match status" value="1"/>
</dbReference>
<dbReference type="Gene3D" id="3.30.70.870">
    <property type="entry name" value="Elongation Factor G (Translational Gtpase), domain 3"/>
    <property type="match status" value="1"/>
</dbReference>
<dbReference type="Gene3D" id="3.40.50.300">
    <property type="entry name" value="P-loop containing nucleotide triphosphate hydrolases"/>
    <property type="match status" value="1"/>
</dbReference>
<dbReference type="Gene3D" id="2.40.30.10">
    <property type="entry name" value="Translation factors"/>
    <property type="match status" value="1"/>
</dbReference>
<dbReference type="HAMAP" id="MF_00071">
    <property type="entry name" value="LepA"/>
    <property type="match status" value="1"/>
</dbReference>
<dbReference type="InterPro" id="IPR006297">
    <property type="entry name" value="EF-4"/>
</dbReference>
<dbReference type="InterPro" id="IPR035647">
    <property type="entry name" value="EFG_III/V"/>
</dbReference>
<dbReference type="InterPro" id="IPR000640">
    <property type="entry name" value="EFG_V-like"/>
</dbReference>
<dbReference type="InterPro" id="IPR004161">
    <property type="entry name" value="EFTu-like_2"/>
</dbReference>
<dbReference type="InterPro" id="IPR031157">
    <property type="entry name" value="G_TR_CS"/>
</dbReference>
<dbReference type="InterPro" id="IPR038363">
    <property type="entry name" value="LepA_C_sf"/>
</dbReference>
<dbReference type="InterPro" id="IPR013842">
    <property type="entry name" value="LepA_CTD"/>
</dbReference>
<dbReference type="InterPro" id="IPR035654">
    <property type="entry name" value="LepA_IV"/>
</dbReference>
<dbReference type="InterPro" id="IPR027417">
    <property type="entry name" value="P-loop_NTPase"/>
</dbReference>
<dbReference type="InterPro" id="IPR005225">
    <property type="entry name" value="Small_GTP-bd"/>
</dbReference>
<dbReference type="InterPro" id="IPR000795">
    <property type="entry name" value="T_Tr_GTP-bd_dom"/>
</dbReference>
<dbReference type="InterPro" id="IPR009000">
    <property type="entry name" value="Transl_B-barrel_sf"/>
</dbReference>
<dbReference type="NCBIfam" id="TIGR01393">
    <property type="entry name" value="lepA"/>
    <property type="match status" value="1"/>
</dbReference>
<dbReference type="NCBIfam" id="TIGR00231">
    <property type="entry name" value="small_GTP"/>
    <property type="match status" value="1"/>
</dbReference>
<dbReference type="PANTHER" id="PTHR43512:SF4">
    <property type="entry name" value="TRANSLATION FACTOR GUF1 HOMOLOG, CHLOROPLASTIC"/>
    <property type="match status" value="1"/>
</dbReference>
<dbReference type="PANTHER" id="PTHR43512">
    <property type="entry name" value="TRANSLATION FACTOR GUF1-RELATED"/>
    <property type="match status" value="1"/>
</dbReference>
<dbReference type="Pfam" id="PF00679">
    <property type="entry name" value="EFG_C"/>
    <property type="match status" value="1"/>
</dbReference>
<dbReference type="Pfam" id="PF00009">
    <property type="entry name" value="GTP_EFTU"/>
    <property type="match status" value="1"/>
</dbReference>
<dbReference type="Pfam" id="PF03144">
    <property type="entry name" value="GTP_EFTU_D2"/>
    <property type="match status" value="1"/>
</dbReference>
<dbReference type="Pfam" id="PF06421">
    <property type="entry name" value="LepA_C"/>
    <property type="match status" value="1"/>
</dbReference>
<dbReference type="PRINTS" id="PR00315">
    <property type="entry name" value="ELONGATNFCT"/>
</dbReference>
<dbReference type="SMART" id="SM00838">
    <property type="entry name" value="EFG_C"/>
    <property type="match status" value="1"/>
</dbReference>
<dbReference type="SUPFAM" id="SSF54980">
    <property type="entry name" value="EF-G C-terminal domain-like"/>
    <property type="match status" value="2"/>
</dbReference>
<dbReference type="SUPFAM" id="SSF52540">
    <property type="entry name" value="P-loop containing nucleoside triphosphate hydrolases"/>
    <property type="match status" value="1"/>
</dbReference>
<dbReference type="SUPFAM" id="SSF50447">
    <property type="entry name" value="Translation proteins"/>
    <property type="match status" value="1"/>
</dbReference>
<dbReference type="PROSITE" id="PS00301">
    <property type="entry name" value="G_TR_1"/>
    <property type="match status" value="1"/>
</dbReference>
<dbReference type="PROSITE" id="PS51722">
    <property type="entry name" value="G_TR_2"/>
    <property type="match status" value="1"/>
</dbReference>
<organism>
    <name type="scientific">Methylibium petroleiphilum (strain ATCC BAA-1232 / LMG 22953 / PM1)</name>
    <dbReference type="NCBI Taxonomy" id="420662"/>
    <lineage>
        <taxon>Bacteria</taxon>
        <taxon>Pseudomonadati</taxon>
        <taxon>Pseudomonadota</taxon>
        <taxon>Betaproteobacteria</taxon>
        <taxon>Burkholderiales</taxon>
        <taxon>Sphaerotilaceae</taxon>
        <taxon>Methylibium</taxon>
    </lineage>
</organism>
<proteinExistence type="inferred from homology"/>